<keyword id="KW-0556">Organic radical</keyword>
<proteinExistence type="inferred from homology"/>
<evidence type="ECO:0000255" key="1">
    <source>
        <dbReference type="HAMAP-Rule" id="MF_00806"/>
    </source>
</evidence>
<organism>
    <name type="scientific">Actinobacillus pleuropneumoniae serotype 7 (strain AP76)</name>
    <dbReference type="NCBI Taxonomy" id="537457"/>
    <lineage>
        <taxon>Bacteria</taxon>
        <taxon>Pseudomonadati</taxon>
        <taxon>Pseudomonadota</taxon>
        <taxon>Gammaproteobacteria</taxon>
        <taxon>Pasteurellales</taxon>
        <taxon>Pasteurellaceae</taxon>
        <taxon>Actinobacillus</taxon>
    </lineage>
</organism>
<gene>
    <name evidence="1" type="primary">grcA</name>
    <name type="ordered locus">APP7_0383</name>
</gene>
<feature type="chain" id="PRO_1000133978" description="Autonomous glycyl radical cofactor">
    <location>
        <begin position="1"/>
        <end position="128"/>
    </location>
</feature>
<feature type="domain" description="Glycine radical" evidence="1">
    <location>
        <begin position="5"/>
        <end position="128"/>
    </location>
</feature>
<feature type="modified residue" description="Glycine radical" evidence="1">
    <location>
        <position position="103"/>
    </location>
</feature>
<name>GRCA_ACTP7</name>
<dbReference type="EMBL" id="CP001091">
    <property type="protein sequence ID" value="ACE61035.1"/>
    <property type="molecule type" value="Genomic_DNA"/>
</dbReference>
<dbReference type="RefSeq" id="WP_005596358.1">
    <property type="nucleotide sequence ID" value="NC_010939.1"/>
</dbReference>
<dbReference type="SMR" id="B3H0M3"/>
<dbReference type="GeneID" id="48598527"/>
<dbReference type="KEGG" id="apa:APP7_0383"/>
<dbReference type="HOGENOM" id="CLU_133780_0_0_6"/>
<dbReference type="Proteomes" id="UP000001226">
    <property type="component" value="Chromosome"/>
</dbReference>
<dbReference type="GO" id="GO:0005829">
    <property type="term" value="C:cytosol"/>
    <property type="evidence" value="ECO:0007669"/>
    <property type="project" value="TreeGrafter"/>
</dbReference>
<dbReference type="GO" id="GO:0008861">
    <property type="term" value="F:formate C-acetyltransferase activity"/>
    <property type="evidence" value="ECO:0007669"/>
    <property type="project" value="TreeGrafter"/>
</dbReference>
<dbReference type="FunFam" id="3.20.70.20:FF:000002">
    <property type="entry name" value="Autonomous glycyl radical cofactor"/>
    <property type="match status" value="1"/>
</dbReference>
<dbReference type="Gene3D" id="3.20.70.20">
    <property type="match status" value="1"/>
</dbReference>
<dbReference type="HAMAP" id="MF_00806">
    <property type="entry name" value="GrcA"/>
    <property type="match status" value="1"/>
</dbReference>
<dbReference type="InterPro" id="IPR050244">
    <property type="entry name" value="Auton_GlycylRad_Cofactor"/>
</dbReference>
<dbReference type="InterPro" id="IPR019777">
    <property type="entry name" value="Form_AcTrfase_GR_CS"/>
</dbReference>
<dbReference type="InterPro" id="IPR001150">
    <property type="entry name" value="Gly_radical"/>
</dbReference>
<dbReference type="InterPro" id="IPR011140">
    <property type="entry name" value="Glycyl_radical_cofactor_GrcA"/>
</dbReference>
<dbReference type="NCBIfam" id="TIGR04365">
    <property type="entry name" value="spare_glycyl"/>
    <property type="match status" value="1"/>
</dbReference>
<dbReference type="PANTHER" id="PTHR30191">
    <property type="entry name" value="FORMATE ACETYLTRANSFERASE"/>
    <property type="match status" value="1"/>
</dbReference>
<dbReference type="PANTHER" id="PTHR30191:SF0">
    <property type="entry name" value="FORMATE ACETYLTRANSFERASE 1"/>
    <property type="match status" value="1"/>
</dbReference>
<dbReference type="Pfam" id="PF01228">
    <property type="entry name" value="Gly_radical"/>
    <property type="match status" value="1"/>
</dbReference>
<dbReference type="PIRSF" id="PIRSF000378">
    <property type="entry name" value="Gly_radicl_yfiD"/>
    <property type="match status" value="1"/>
</dbReference>
<dbReference type="SUPFAM" id="SSF51998">
    <property type="entry name" value="PFL-like glycyl radical enzymes"/>
    <property type="match status" value="1"/>
</dbReference>
<dbReference type="PROSITE" id="PS00850">
    <property type="entry name" value="GLY_RADICAL_1"/>
    <property type="match status" value="1"/>
</dbReference>
<dbReference type="PROSITE" id="PS51149">
    <property type="entry name" value="GLY_RADICAL_2"/>
    <property type="match status" value="1"/>
</dbReference>
<comment type="function">
    <text evidence="1">Acts as a radical domain for damaged PFL and possibly other radical proteins.</text>
</comment>
<sequence>MIKGVQITESSNSNLVNSFWLLDEEKNEARCIAAKGDVYKEDQVIAISELGQIAYREVPVNVAPTIKVEGGQHLNVNVLRRETLEDAVKNPEKYPQLTIRVSGYAVRFNSLTPEQQRDVITRTFTESL</sequence>
<reference key="1">
    <citation type="submission" date="2008-06" db="EMBL/GenBank/DDBJ databases">
        <title>Genome and proteome analysis of A. pleuropneumoniae serotype 7.</title>
        <authorList>
            <person name="Linke B."/>
            <person name="Buettner F."/>
            <person name="Martinez-Arias R."/>
            <person name="Goesmann A."/>
            <person name="Baltes N."/>
            <person name="Tegetmeyer H."/>
            <person name="Singh M."/>
            <person name="Gerlach G.F."/>
        </authorList>
    </citation>
    <scope>NUCLEOTIDE SEQUENCE [LARGE SCALE GENOMIC DNA]</scope>
    <source>
        <strain>AP76</strain>
    </source>
</reference>
<protein>
    <recommendedName>
        <fullName evidence="1">Autonomous glycyl radical cofactor</fullName>
    </recommendedName>
</protein>
<accession>B3H0M3</accession>